<protein>
    <recommendedName>
        <fullName evidence="1">Flap endonuclease 1-B</fullName>
        <shortName evidence="1">FEN-1-B</shortName>
        <ecNumber evidence="1">3.1.-.-</ecNumber>
    </recommendedName>
    <alternativeName>
        <fullName evidence="1">Flap structure-specific endonuclease 1-B</fullName>
    </alternativeName>
</protein>
<keyword id="KW-0227">DNA damage</keyword>
<keyword id="KW-0234">DNA repair</keyword>
<keyword id="KW-0235">DNA replication</keyword>
<keyword id="KW-0255">Endonuclease</keyword>
<keyword id="KW-0269">Exonuclease</keyword>
<keyword id="KW-0378">Hydrolase</keyword>
<keyword id="KW-0460">Magnesium</keyword>
<keyword id="KW-0479">Metal-binding</keyword>
<keyword id="KW-0496">Mitochondrion</keyword>
<keyword id="KW-0540">Nuclease</keyword>
<keyword id="KW-0539">Nucleus</keyword>
<keyword id="KW-0597">Phosphoprotein</keyword>
<keyword id="KW-1185">Reference proteome</keyword>
<accession>B0E412</accession>
<reference key="1">
    <citation type="journal article" date="2008" name="Nature">
        <title>The genome of Laccaria bicolor provides insights into mycorrhizal symbiosis.</title>
        <authorList>
            <person name="Martin F."/>
            <person name="Aerts A."/>
            <person name="Ahren D."/>
            <person name="Brun A."/>
            <person name="Danchin E.G.J."/>
            <person name="Duchaussoy F."/>
            <person name="Gibon J."/>
            <person name="Kohler A."/>
            <person name="Lindquist E."/>
            <person name="Pereda V."/>
            <person name="Salamov A."/>
            <person name="Shapiro H.J."/>
            <person name="Wuyts J."/>
            <person name="Blaudez D."/>
            <person name="Buee M."/>
            <person name="Brokstein P."/>
            <person name="Canbaeck B."/>
            <person name="Cohen D."/>
            <person name="Courty P.E."/>
            <person name="Coutinho P.M."/>
            <person name="Delaruelle C."/>
            <person name="Detter J.C."/>
            <person name="Deveau A."/>
            <person name="DiFazio S."/>
            <person name="Duplessis S."/>
            <person name="Fraissinet-Tachet L."/>
            <person name="Lucic E."/>
            <person name="Frey-Klett P."/>
            <person name="Fourrey C."/>
            <person name="Feussner I."/>
            <person name="Gay G."/>
            <person name="Grimwood J."/>
            <person name="Hoegger P.J."/>
            <person name="Jain P."/>
            <person name="Kilaru S."/>
            <person name="Labbe J."/>
            <person name="Lin Y.C."/>
            <person name="Legue V."/>
            <person name="Le Tacon F."/>
            <person name="Marmeisse R."/>
            <person name="Melayah D."/>
            <person name="Montanini B."/>
            <person name="Muratet M."/>
            <person name="Nehls U."/>
            <person name="Niculita-Hirzel H."/>
            <person name="Oudot-Le Secq M.P."/>
            <person name="Peter M."/>
            <person name="Quesneville H."/>
            <person name="Rajashekar B."/>
            <person name="Reich M."/>
            <person name="Rouhier N."/>
            <person name="Schmutz J."/>
            <person name="Yin T."/>
            <person name="Chalot M."/>
            <person name="Henrissat B."/>
            <person name="Kuees U."/>
            <person name="Lucas S."/>
            <person name="Van de Peer Y."/>
            <person name="Podila G.K."/>
            <person name="Polle A."/>
            <person name="Pukkila P.J."/>
            <person name="Richardson P.M."/>
            <person name="Rouze P."/>
            <person name="Sanders I.R."/>
            <person name="Stajich J.E."/>
            <person name="Tunlid A."/>
            <person name="Tuskan G."/>
            <person name="Grigoriev I.V."/>
        </authorList>
    </citation>
    <scope>NUCLEOTIDE SEQUENCE [LARGE SCALE GENOMIC DNA]</scope>
    <source>
        <strain>S238N-H82 / ATCC MYA-4686</strain>
    </source>
</reference>
<organism>
    <name type="scientific">Laccaria bicolor (strain S238N-H82 / ATCC MYA-4686)</name>
    <name type="common">Bicoloured deceiver</name>
    <name type="synonym">Laccaria laccata var. bicolor</name>
    <dbReference type="NCBI Taxonomy" id="486041"/>
    <lineage>
        <taxon>Eukaryota</taxon>
        <taxon>Fungi</taxon>
        <taxon>Dikarya</taxon>
        <taxon>Basidiomycota</taxon>
        <taxon>Agaricomycotina</taxon>
        <taxon>Agaricomycetes</taxon>
        <taxon>Agaricomycetidae</taxon>
        <taxon>Agaricales</taxon>
        <taxon>Agaricineae</taxon>
        <taxon>Hydnangiaceae</taxon>
        <taxon>Laccaria</taxon>
    </lineage>
</organism>
<comment type="function">
    <text evidence="1">Structure-specific nuclease with 5'-flap endonuclease and 5'-3' exonuclease activities involved in DNA replication and repair. During DNA replication, cleaves the 5'-overhanging flap structure that is generated by displacement synthesis when DNA polymerase encounters the 5'-end of a downstream Okazaki fragment. It enters the flap from the 5'-end and then tracks to cleave the flap base, leaving a nick for ligation. Also involved in the long patch base excision repair (LP-BER) pathway, by cleaving within the apurinic/apyrimidinic (AP) site-terminated flap. Acts as a genome stabilization factor that prevents flaps from equilibrating into structures that lead to duplications and deletions. Also possesses 5'-3' exonuclease activity on nicked or gapped double-stranded DNA, and exhibits RNase H activity. Also involved in replication and repair of rDNA and in repairing mitochondrial DNA.</text>
</comment>
<comment type="cofactor">
    <cofactor evidence="1">
        <name>Mg(2+)</name>
        <dbReference type="ChEBI" id="CHEBI:18420"/>
    </cofactor>
    <text evidence="1">Binds 2 magnesium ions per subunit. They probably participate in the reaction catalyzed by the enzyme. May bind an additional third magnesium ion after substrate binding.</text>
</comment>
<comment type="subunit">
    <text evidence="1">Interacts with PCNA. Three molecules of FEN1 bind to one PCNA trimer with each molecule binding to one PCNA monomer. PCNA stimulates the nuclease activity without altering cleavage specificity.</text>
</comment>
<comment type="subcellular location">
    <subcellularLocation>
        <location evidence="1">Nucleus</location>
        <location evidence="1">Nucleolus</location>
    </subcellularLocation>
    <subcellularLocation>
        <location evidence="1">Nucleus</location>
        <location evidence="1">Nucleoplasm</location>
    </subcellularLocation>
    <subcellularLocation>
        <location evidence="1">Mitochondrion</location>
    </subcellularLocation>
    <text evidence="1">Resides mostly in the nucleoli and relocalizes to the nucleoplasm upon DNA damage.</text>
</comment>
<comment type="PTM">
    <text evidence="1">Phosphorylated. Phosphorylation upon DNA damage induces relocalization to the nuclear plasma.</text>
</comment>
<comment type="similarity">
    <text evidence="1">Belongs to the XPG/RAD2 endonuclease family. FEN1 subfamily.</text>
</comment>
<proteinExistence type="inferred from homology"/>
<dbReference type="EC" id="3.1.-.-" evidence="1"/>
<dbReference type="EMBL" id="DS547292">
    <property type="protein sequence ID" value="EDQ98419.1"/>
    <property type="molecule type" value="Genomic_DNA"/>
</dbReference>
<dbReference type="RefSeq" id="XP_001890929.1">
    <property type="nucleotide sequence ID" value="XM_001890894.1"/>
</dbReference>
<dbReference type="SMR" id="B0E412"/>
<dbReference type="FunCoup" id="B0E412">
    <property type="interactions" value="757"/>
</dbReference>
<dbReference type="STRING" id="486041.B0E412"/>
<dbReference type="GeneID" id="6086585"/>
<dbReference type="KEGG" id="lbc:LACBIDRAFT_192371"/>
<dbReference type="HOGENOM" id="CLU_032444_1_1_1"/>
<dbReference type="InParanoid" id="B0E412"/>
<dbReference type="OrthoDB" id="1937206at2759"/>
<dbReference type="Proteomes" id="UP000001194">
    <property type="component" value="Unassembled WGS sequence"/>
</dbReference>
<dbReference type="GO" id="GO:0005739">
    <property type="term" value="C:mitochondrion"/>
    <property type="evidence" value="ECO:0007669"/>
    <property type="project" value="UniProtKB-SubCell"/>
</dbReference>
<dbReference type="GO" id="GO:0005730">
    <property type="term" value="C:nucleolus"/>
    <property type="evidence" value="ECO:0007669"/>
    <property type="project" value="UniProtKB-SubCell"/>
</dbReference>
<dbReference type="GO" id="GO:0005654">
    <property type="term" value="C:nucleoplasm"/>
    <property type="evidence" value="ECO:0007669"/>
    <property type="project" value="UniProtKB-SubCell"/>
</dbReference>
<dbReference type="GO" id="GO:0008409">
    <property type="term" value="F:5'-3' exonuclease activity"/>
    <property type="evidence" value="ECO:0007669"/>
    <property type="project" value="UniProtKB-UniRule"/>
</dbReference>
<dbReference type="GO" id="GO:0017108">
    <property type="term" value="F:5'-flap endonuclease activity"/>
    <property type="evidence" value="ECO:0007669"/>
    <property type="project" value="UniProtKB-UniRule"/>
</dbReference>
<dbReference type="GO" id="GO:0003677">
    <property type="term" value="F:DNA binding"/>
    <property type="evidence" value="ECO:0007669"/>
    <property type="project" value="UniProtKB-UniRule"/>
</dbReference>
<dbReference type="GO" id="GO:0000287">
    <property type="term" value="F:magnesium ion binding"/>
    <property type="evidence" value="ECO:0007669"/>
    <property type="project" value="UniProtKB-UniRule"/>
</dbReference>
<dbReference type="GO" id="GO:0006284">
    <property type="term" value="P:base-excision repair"/>
    <property type="evidence" value="ECO:0007669"/>
    <property type="project" value="UniProtKB-UniRule"/>
</dbReference>
<dbReference type="GO" id="GO:0043137">
    <property type="term" value="P:DNA replication, removal of RNA primer"/>
    <property type="evidence" value="ECO:0007669"/>
    <property type="project" value="UniProtKB-UniRule"/>
</dbReference>
<dbReference type="CDD" id="cd09867">
    <property type="entry name" value="PIN_FEN1"/>
    <property type="match status" value="1"/>
</dbReference>
<dbReference type="FunFam" id="3.40.50.1010:FF:000003">
    <property type="entry name" value="Flap endonuclease 1"/>
    <property type="match status" value="1"/>
</dbReference>
<dbReference type="Gene3D" id="1.10.150.20">
    <property type="entry name" value="5' to 3' exonuclease, C-terminal subdomain"/>
    <property type="match status" value="1"/>
</dbReference>
<dbReference type="Gene3D" id="3.40.50.1010">
    <property type="entry name" value="5'-nuclease"/>
    <property type="match status" value="1"/>
</dbReference>
<dbReference type="HAMAP" id="MF_00614">
    <property type="entry name" value="Fen"/>
    <property type="match status" value="1"/>
</dbReference>
<dbReference type="InterPro" id="IPR036279">
    <property type="entry name" value="5-3_exonuclease_C_sf"/>
</dbReference>
<dbReference type="InterPro" id="IPR023426">
    <property type="entry name" value="Flap_endonuc"/>
</dbReference>
<dbReference type="InterPro" id="IPR008918">
    <property type="entry name" value="HhH2"/>
</dbReference>
<dbReference type="InterPro" id="IPR029060">
    <property type="entry name" value="PIN-like_dom_sf"/>
</dbReference>
<dbReference type="InterPro" id="IPR006086">
    <property type="entry name" value="XPG-I_dom"/>
</dbReference>
<dbReference type="InterPro" id="IPR006084">
    <property type="entry name" value="XPG/Rad2"/>
</dbReference>
<dbReference type="InterPro" id="IPR019974">
    <property type="entry name" value="XPG_CS"/>
</dbReference>
<dbReference type="InterPro" id="IPR006085">
    <property type="entry name" value="XPG_DNA_repair_N"/>
</dbReference>
<dbReference type="PANTHER" id="PTHR11081:SF9">
    <property type="entry name" value="FLAP ENDONUCLEASE 1"/>
    <property type="match status" value="1"/>
</dbReference>
<dbReference type="PANTHER" id="PTHR11081">
    <property type="entry name" value="FLAP ENDONUCLEASE FAMILY MEMBER"/>
    <property type="match status" value="1"/>
</dbReference>
<dbReference type="Pfam" id="PF00867">
    <property type="entry name" value="XPG_I"/>
    <property type="match status" value="1"/>
</dbReference>
<dbReference type="Pfam" id="PF00752">
    <property type="entry name" value="XPG_N"/>
    <property type="match status" value="1"/>
</dbReference>
<dbReference type="PRINTS" id="PR00853">
    <property type="entry name" value="XPGRADSUPER"/>
</dbReference>
<dbReference type="SMART" id="SM00279">
    <property type="entry name" value="HhH2"/>
    <property type="match status" value="1"/>
</dbReference>
<dbReference type="SMART" id="SM00484">
    <property type="entry name" value="XPGI"/>
    <property type="match status" value="1"/>
</dbReference>
<dbReference type="SMART" id="SM00485">
    <property type="entry name" value="XPGN"/>
    <property type="match status" value="1"/>
</dbReference>
<dbReference type="SUPFAM" id="SSF47807">
    <property type="entry name" value="5' to 3' exonuclease, C-terminal subdomain"/>
    <property type="match status" value="1"/>
</dbReference>
<dbReference type="SUPFAM" id="SSF88723">
    <property type="entry name" value="PIN domain-like"/>
    <property type="match status" value="1"/>
</dbReference>
<dbReference type="PROSITE" id="PS00841">
    <property type="entry name" value="XPG_1"/>
    <property type="match status" value="1"/>
</dbReference>
<dbReference type="PROSITE" id="PS00842">
    <property type="entry name" value="XPG_2"/>
    <property type="match status" value="1"/>
</dbReference>
<feature type="chain" id="PRO_0000403581" description="Flap endonuclease 1-B">
    <location>
        <begin position="1"/>
        <end position="469"/>
    </location>
</feature>
<feature type="region of interest" description="N-domain">
    <location>
        <begin position="1"/>
        <end position="103"/>
    </location>
</feature>
<feature type="region of interest" description="I-domain">
    <location>
        <begin position="121"/>
        <end position="257"/>
    </location>
</feature>
<feature type="region of interest" description="Disordered" evidence="2">
    <location>
        <begin position="274"/>
        <end position="354"/>
    </location>
</feature>
<feature type="region of interest" description="Interaction with PCNA" evidence="1">
    <location>
        <begin position="412"/>
        <end position="420"/>
    </location>
</feature>
<feature type="region of interest" description="Disordered" evidence="2">
    <location>
        <begin position="424"/>
        <end position="469"/>
    </location>
</feature>
<feature type="compositionally biased region" description="Acidic residues" evidence="2">
    <location>
        <begin position="282"/>
        <end position="295"/>
    </location>
</feature>
<feature type="compositionally biased region" description="Acidic residues" evidence="2">
    <location>
        <begin position="302"/>
        <end position="317"/>
    </location>
</feature>
<feature type="compositionally biased region" description="Basic residues" evidence="2">
    <location>
        <begin position="326"/>
        <end position="342"/>
    </location>
</feature>
<feature type="compositionally biased region" description="Basic and acidic residues" evidence="2">
    <location>
        <begin position="441"/>
        <end position="459"/>
    </location>
</feature>
<feature type="binding site" evidence="1">
    <location>
        <position position="32"/>
    </location>
    <ligand>
        <name>Mg(2+)</name>
        <dbReference type="ChEBI" id="CHEBI:18420"/>
        <label>1</label>
    </ligand>
</feature>
<feature type="binding site" evidence="1">
    <location>
        <position position="45"/>
    </location>
    <ligand>
        <name>DNA</name>
        <dbReference type="ChEBI" id="CHEBI:16991"/>
    </ligand>
</feature>
<feature type="binding site" evidence="1">
    <location>
        <position position="69"/>
    </location>
    <ligand>
        <name>DNA</name>
        <dbReference type="ChEBI" id="CHEBI:16991"/>
    </ligand>
</feature>
<feature type="binding site" evidence="1">
    <location>
        <position position="85"/>
    </location>
    <ligand>
        <name>Mg(2+)</name>
        <dbReference type="ChEBI" id="CHEBI:18420"/>
        <label>1</label>
    </ligand>
</feature>
<feature type="binding site" evidence="1">
    <location>
        <position position="157"/>
    </location>
    <ligand>
        <name>DNA</name>
        <dbReference type="ChEBI" id="CHEBI:16991"/>
    </ligand>
</feature>
<feature type="binding site" evidence="1">
    <location>
        <position position="157"/>
    </location>
    <ligand>
        <name>Mg(2+)</name>
        <dbReference type="ChEBI" id="CHEBI:18420"/>
        <label>1</label>
    </ligand>
</feature>
<feature type="binding site" evidence="1">
    <location>
        <position position="159"/>
    </location>
    <ligand>
        <name>Mg(2+)</name>
        <dbReference type="ChEBI" id="CHEBI:18420"/>
        <label>1</label>
    </ligand>
</feature>
<feature type="binding site" evidence="1">
    <location>
        <position position="183"/>
    </location>
    <ligand>
        <name>Mg(2+)</name>
        <dbReference type="ChEBI" id="CHEBI:18420"/>
        <label>2</label>
    </ligand>
</feature>
<feature type="binding site" evidence="1">
    <location>
        <position position="185"/>
    </location>
    <ligand>
        <name>Mg(2+)</name>
        <dbReference type="ChEBI" id="CHEBI:18420"/>
        <label>2</label>
    </ligand>
</feature>
<feature type="binding site" evidence="1">
    <location>
        <position position="235"/>
    </location>
    <ligand>
        <name>DNA</name>
        <dbReference type="ChEBI" id="CHEBI:16991"/>
    </ligand>
</feature>
<feature type="binding site" evidence="1">
    <location>
        <position position="237"/>
    </location>
    <ligand>
        <name>DNA</name>
        <dbReference type="ChEBI" id="CHEBI:16991"/>
    </ligand>
</feature>
<feature type="binding site" evidence="1">
    <location>
        <position position="237"/>
    </location>
    <ligand>
        <name>Mg(2+)</name>
        <dbReference type="ChEBI" id="CHEBI:18420"/>
        <label>2</label>
    </ligand>
</feature>
<name>FEN12_LACBS</name>
<gene>
    <name evidence="1" type="primary">FEN12</name>
    <name type="ORF">LACBIDRAFT_192371</name>
</gene>
<evidence type="ECO:0000255" key="1">
    <source>
        <dbReference type="HAMAP-Rule" id="MF_03140"/>
    </source>
</evidence>
<evidence type="ECO:0000256" key="2">
    <source>
        <dbReference type="SAM" id="MobiDB-lite"/>
    </source>
</evidence>
<sequence>MGIKGLTGLLSQHAPKAIKEIKTLFGRKVAIDASMSIYQFLIAVRQKDGELLTNDAGETTRYLMGLFYRTLRIVENGIKPAYIFDGKPPELKKGVLSKRLERREEAKEEGEEAKETGTVEDVDRFSRRTVKVTREHNQECQRLLRLMGIPVVIAPSEAEAQCAELARGGKVYIALYYAAGSEDMDTLTFNAPILFRHLTFSEAKKQPISEINLKEALEGPLYSFPTFIDLCILLGCDYLEPIKGVGPKSALKLIREYGGLKGVVKHLREKAATQKAAQAAVESDEESEHEEEDEPAPTSDVEMPDPVEEDQDGEEEAEPKSSQATPKKKKASSKTKEKRKGKGGGGMQIPEEWPWEEAKKIFKRPSHVHRDLEWTNPDVDGLVQFLVNEKGFNEDRVRKGAEKLQKFLNSKQQGRLDGFFSVKPKEKAAAPAPVGKAKGKGKIDAKAKGTKRKVDEKAESSAGKKPRKK</sequence>